<comment type="catalytic activity">
    <reaction evidence="1">
        <text>tRNA(Phe) + L-phenylalanine + ATP = L-phenylalanyl-tRNA(Phe) + AMP + diphosphate + H(+)</text>
        <dbReference type="Rhea" id="RHEA:19413"/>
        <dbReference type="Rhea" id="RHEA-COMP:9668"/>
        <dbReference type="Rhea" id="RHEA-COMP:9699"/>
        <dbReference type="ChEBI" id="CHEBI:15378"/>
        <dbReference type="ChEBI" id="CHEBI:30616"/>
        <dbReference type="ChEBI" id="CHEBI:33019"/>
        <dbReference type="ChEBI" id="CHEBI:58095"/>
        <dbReference type="ChEBI" id="CHEBI:78442"/>
        <dbReference type="ChEBI" id="CHEBI:78531"/>
        <dbReference type="ChEBI" id="CHEBI:456215"/>
        <dbReference type="EC" id="6.1.1.20"/>
    </reaction>
</comment>
<comment type="cofactor">
    <cofactor evidence="1">
        <name>Mg(2+)</name>
        <dbReference type="ChEBI" id="CHEBI:18420"/>
    </cofactor>
    <text evidence="1">Binds 2 magnesium ions per tetramer.</text>
</comment>
<comment type="subunit">
    <text evidence="1">Tetramer of two alpha and two beta subunits.</text>
</comment>
<comment type="subcellular location">
    <subcellularLocation>
        <location evidence="1">Cytoplasm</location>
    </subcellularLocation>
</comment>
<comment type="similarity">
    <text evidence="1">Belongs to the class-II aminoacyl-tRNA synthetase family. Phe-tRNA synthetase alpha subunit type 1 subfamily.</text>
</comment>
<reference key="1">
    <citation type="journal article" date="2005" name="Proc. Natl. Acad. Sci. U.S.A.">
        <title>Comparison of the complete genome sequences of Pseudomonas syringae pv. syringae B728a and pv. tomato DC3000.</title>
        <authorList>
            <person name="Feil H."/>
            <person name="Feil W.S."/>
            <person name="Chain P."/>
            <person name="Larimer F."/>
            <person name="Dibartolo G."/>
            <person name="Copeland A."/>
            <person name="Lykidis A."/>
            <person name="Trong S."/>
            <person name="Nolan M."/>
            <person name="Goltsman E."/>
            <person name="Thiel J."/>
            <person name="Malfatti S."/>
            <person name="Loper J.E."/>
            <person name="Lapidus A."/>
            <person name="Detter J.C."/>
            <person name="Land M."/>
            <person name="Richardson P.M."/>
            <person name="Kyrpides N.C."/>
            <person name="Ivanova N."/>
            <person name="Lindow S.E."/>
        </authorList>
    </citation>
    <scope>NUCLEOTIDE SEQUENCE [LARGE SCALE GENOMIC DNA]</scope>
    <source>
        <strain>B728a</strain>
    </source>
</reference>
<proteinExistence type="inferred from homology"/>
<protein>
    <recommendedName>
        <fullName evidence="1">Phenylalanine--tRNA ligase alpha subunit</fullName>
        <ecNumber evidence="1">6.1.1.20</ecNumber>
    </recommendedName>
    <alternativeName>
        <fullName evidence="1">Phenylalanyl-tRNA synthetase alpha subunit</fullName>
        <shortName evidence="1">PheRS</shortName>
    </alternativeName>
</protein>
<evidence type="ECO:0000255" key="1">
    <source>
        <dbReference type="HAMAP-Rule" id="MF_00281"/>
    </source>
</evidence>
<keyword id="KW-0030">Aminoacyl-tRNA synthetase</keyword>
<keyword id="KW-0067">ATP-binding</keyword>
<keyword id="KW-0963">Cytoplasm</keyword>
<keyword id="KW-0436">Ligase</keyword>
<keyword id="KW-0460">Magnesium</keyword>
<keyword id="KW-0479">Metal-binding</keyword>
<keyword id="KW-0547">Nucleotide-binding</keyword>
<keyword id="KW-0648">Protein biosynthesis</keyword>
<feature type="chain" id="PRO_0000232015" description="Phenylalanine--tRNA ligase alpha subunit">
    <location>
        <begin position="1"/>
        <end position="338"/>
    </location>
</feature>
<feature type="binding site" evidence="1">
    <location>
        <position position="252"/>
    </location>
    <ligand>
        <name>Mg(2+)</name>
        <dbReference type="ChEBI" id="CHEBI:18420"/>
        <note>shared with beta subunit</note>
    </ligand>
</feature>
<sequence>MENLDALVSQALEAVQSAEDINALEQIRVHYLGKKGELTQVMKTLGNLPAEERPQVGALINVAKERVTEVLNARKASFEQAELTARLAAECIDVTLPGRGQTSGGLHPITRTLERIEQFFTHIGYGIAEGPEVEDDYHNFEALNIPGHHPARSMHDTFYFNANMLLRTHTSPVQVRTMESQQPPIRIVCPGRVYRSDSDITHSPMFHQIEGLLVDRDINFADLKGTIEEFLRVFFEKELAVRFRPSYFPFTEPSAEVDMECVMCSGKGCRVCKQTGWLEVMGCGMVHPNVLRMSGIDPEEFQGFAFGMGVERLAMLRYGVNDLRLFFDNDLRFLAQFR</sequence>
<name>SYFA_PSEU2</name>
<gene>
    <name evidence="1" type="primary">pheS</name>
    <name type="ordered locus">Psyr_2166</name>
</gene>
<dbReference type="EC" id="6.1.1.20" evidence="1"/>
<dbReference type="EMBL" id="CP000075">
    <property type="protein sequence ID" value="AAY37209.1"/>
    <property type="molecule type" value="Genomic_DNA"/>
</dbReference>
<dbReference type="RefSeq" id="WP_003367019.1">
    <property type="nucleotide sequence ID" value="NC_007005.1"/>
</dbReference>
<dbReference type="RefSeq" id="YP_235247.1">
    <property type="nucleotide sequence ID" value="NC_007005.1"/>
</dbReference>
<dbReference type="SMR" id="Q4ZUG3"/>
<dbReference type="STRING" id="205918.Psyr_2166"/>
<dbReference type="GeneID" id="77278030"/>
<dbReference type="KEGG" id="psb:Psyr_2166"/>
<dbReference type="PATRIC" id="fig|205918.7.peg.2216"/>
<dbReference type="eggNOG" id="COG0016">
    <property type="taxonomic scope" value="Bacteria"/>
</dbReference>
<dbReference type="HOGENOM" id="CLU_025086_0_1_6"/>
<dbReference type="OrthoDB" id="9800719at2"/>
<dbReference type="Proteomes" id="UP000000426">
    <property type="component" value="Chromosome"/>
</dbReference>
<dbReference type="GO" id="GO:0005737">
    <property type="term" value="C:cytoplasm"/>
    <property type="evidence" value="ECO:0007669"/>
    <property type="project" value="UniProtKB-SubCell"/>
</dbReference>
<dbReference type="GO" id="GO:0005524">
    <property type="term" value="F:ATP binding"/>
    <property type="evidence" value="ECO:0007669"/>
    <property type="project" value="UniProtKB-UniRule"/>
</dbReference>
<dbReference type="GO" id="GO:0000287">
    <property type="term" value="F:magnesium ion binding"/>
    <property type="evidence" value="ECO:0007669"/>
    <property type="project" value="UniProtKB-UniRule"/>
</dbReference>
<dbReference type="GO" id="GO:0004826">
    <property type="term" value="F:phenylalanine-tRNA ligase activity"/>
    <property type="evidence" value="ECO:0007669"/>
    <property type="project" value="UniProtKB-UniRule"/>
</dbReference>
<dbReference type="GO" id="GO:0000049">
    <property type="term" value="F:tRNA binding"/>
    <property type="evidence" value="ECO:0007669"/>
    <property type="project" value="InterPro"/>
</dbReference>
<dbReference type="GO" id="GO:0006432">
    <property type="term" value="P:phenylalanyl-tRNA aminoacylation"/>
    <property type="evidence" value="ECO:0007669"/>
    <property type="project" value="UniProtKB-UniRule"/>
</dbReference>
<dbReference type="CDD" id="cd00496">
    <property type="entry name" value="PheRS_alpha_core"/>
    <property type="match status" value="1"/>
</dbReference>
<dbReference type="FunFam" id="3.30.930.10:FF:000003">
    <property type="entry name" value="Phenylalanine--tRNA ligase alpha subunit"/>
    <property type="match status" value="1"/>
</dbReference>
<dbReference type="Gene3D" id="3.30.930.10">
    <property type="entry name" value="Bira Bifunctional Protein, Domain 2"/>
    <property type="match status" value="1"/>
</dbReference>
<dbReference type="HAMAP" id="MF_00281">
    <property type="entry name" value="Phe_tRNA_synth_alpha1"/>
    <property type="match status" value="1"/>
</dbReference>
<dbReference type="InterPro" id="IPR006195">
    <property type="entry name" value="aa-tRNA-synth_II"/>
</dbReference>
<dbReference type="InterPro" id="IPR045864">
    <property type="entry name" value="aa-tRNA-synth_II/BPL/LPL"/>
</dbReference>
<dbReference type="InterPro" id="IPR004529">
    <property type="entry name" value="Phe-tRNA-synth_IIc_asu"/>
</dbReference>
<dbReference type="InterPro" id="IPR004188">
    <property type="entry name" value="Phe-tRNA_ligase_II_N"/>
</dbReference>
<dbReference type="InterPro" id="IPR022911">
    <property type="entry name" value="Phe_tRNA_ligase_alpha1_bac"/>
</dbReference>
<dbReference type="InterPro" id="IPR002319">
    <property type="entry name" value="Phenylalanyl-tRNA_Synthase"/>
</dbReference>
<dbReference type="InterPro" id="IPR010978">
    <property type="entry name" value="tRNA-bd_arm"/>
</dbReference>
<dbReference type="NCBIfam" id="TIGR00468">
    <property type="entry name" value="pheS"/>
    <property type="match status" value="1"/>
</dbReference>
<dbReference type="PANTHER" id="PTHR11538:SF41">
    <property type="entry name" value="PHENYLALANINE--TRNA LIGASE, MITOCHONDRIAL"/>
    <property type="match status" value="1"/>
</dbReference>
<dbReference type="PANTHER" id="PTHR11538">
    <property type="entry name" value="PHENYLALANYL-TRNA SYNTHETASE"/>
    <property type="match status" value="1"/>
</dbReference>
<dbReference type="Pfam" id="PF02912">
    <property type="entry name" value="Phe_tRNA-synt_N"/>
    <property type="match status" value="1"/>
</dbReference>
<dbReference type="Pfam" id="PF01409">
    <property type="entry name" value="tRNA-synt_2d"/>
    <property type="match status" value="1"/>
</dbReference>
<dbReference type="SUPFAM" id="SSF55681">
    <property type="entry name" value="Class II aaRS and biotin synthetases"/>
    <property type="match status" value="1"/>
</dbReference>
<dbReference type="SUPFAM" id="SSF46589">
    <property type="entry name" value="tRNA-binding arm"/>
    <property type="match status" value="1"/>
</dbReference>
<dbReference type="PROSITE" id="PS50862">
    <property type="entry name" value="AA_TRNA_LIGASE_II"/>
    <property type="match status" value="1"/>
</dbReference>
<accession>Q4ZUG3</accession>
<organism>
    <name type="scientific">Pseudomonas syringae pv. syringae (strain B728a)</name>
    <dbReference type="NCBI Taxonomy" id="205918"/>
    <lineage>
        <taxon>Bacteria</taxon>
        <taxon>Pseudomonadati</taxon>
        <taxon>Pseudomonadota</taxon>
        <taxon>Gammaproteobacteria</taxon>
        <taxon>Pseudomonadales</taxon>
        <taxon>Pseudomonadaceae</taxon>
        <taxon>Pseudomonas</taxon>
        <taxon>Pseudomonas syringae</taxon>
    </lineage>
</organism>